<dbReference type="EC" id="6.3.4.5" evidence="1"/>
<dbReference type="EMBL" id="AE016823">
    <property type="protein sequence ID" value="AAS71866.1"/>
    <property type="molecule type" value="Genomic_DNA"/>
</dbReference>
<dbReference type="RefSeq" id="WP_000068289.1">
    <property type="nucleotide sequence ID" value="NC_005823.1"/>
</dbReference>
<dbReference type="SMR" id="P61524"/>
<dbReference type="KEGG" id="lic:LIC_13324"/>
<dbReference type="HOGENOM" id="CLU_032784_4_2_12"/>
<dbReference type="UniPathway" id="UPA00068">
    <property type="reaction ID" value="UER00113"/>
</dbReference>
<dbReference type="Proteomes" id="UP000007037">
    <property type="component" value="Chromosome I"/>
</dbReference>
<dbReference type="GO" id="GO:0005737">
    <property type="term" value="C:cytoplasm"/>
    <property type="evidence" value="ECO:0007669"/>
    <property type="project" value="UniProtKB-SubCell"/>
</dbReference>
<dbReference type="GO" id="GO:0004055">
    <property type="term" value="F:argininosuccinate synthase activity"/>
    <property type="evidence" value="ECO:0007669"/>
    <property type="project" value="UniProtKB-UniRule"/>
</dbReference>
<dbReference type="GO" id="GO:0005524">
    <property type="term" value="F:ATP binding"/>
    <property type="evidence" value="ECO:0007669"/>
    <property type="project" value="UniProtKB-UniRule"/>
</dbReference>
<dbReference type="GO" id="GO:0000053">
    <property type="term" value="P:argininosuccinate metabolic process"/>
    <property type="evidence" value="ECO:0007669"/>
    <property type="project" value="TreeGrafter"/>
</dbReference>
<dbReference type="GO" id="GO:0006526">
    <property type="term" value="P:L-arginine biosynthetic process"/>
    <property type="evidence" value="ECO:0007669"/>
    <property type="project" value="UniProtKB-UniRule"/>
</dbReference>
<dbReference type="GO" id="GO:0000050">
    <property type="term" value="P:urea cycle"/>
    <property type="evidence" value="ECO:0007669"/>
    <property type="project" value="TreeGrafter"/>
</dbReference>
<dbReference type="CDD" id="cd01999">
    <property type="entry name" value="ASS"/>
    <property type="match status" value="1"/>
</dbReference>
<dbReference type="FunFam" id="3.40.50.620:FF:000019">
    <property type="entry name" value="Argininosuccinate synthase"/>
    <property type="match status" value="1"/>
</dbReference>
<dbReference type="FunFam" id="3.90.1260.10:FF:000007">
    <property type="entry name" value="Argininosuccinate synthase"/>
    <property type="match status" value="1"/>
</dbReference>
<dbReference type="Gene3D" id="3.90.1260.10">
    <property type="entry name" value="Argininosuccinate synthetase, chain A, domain 2"/>
    <property type="match status" value="1"/>
</dbReference>
<dbReference type="Gene3D" id="3.40.50.620">
    <property type="entry name" value="HUPs"/>
    <property type="match status" value="1"/>
</dbReference>
<dbReference type="HAMAP" id="MF_00005">
    <property type="entry name" value="Arg_succ_synth_type1"/>
    <property type="match status" value="1"/>
</dbReference>
<dbReference type="InterPro" id="IPR048268">
    <property type="entry name" value="Arginosuc_syn_C"/>
</dbReference>
<dbReference type="InterPro" id="IPR048267">
    <property type="entry name" value="Arginosuc_syn_N"/>
</dbReference>
<dbReference type="InterPro" id="IPR001518">
    <property type="entry name" value="Arginosuc_synth"/>
</dbReference>
<dbReference type="InterPro" id="IPR018223">
    <property type="entry name" value="Arginosuc_synth_CS"/>
</dbReference>
<dbReference type="InterPro" id="IPR023434">
    <property type="entry name" value="Arginosuc_synth_type_1_subfam"/>
</dbReference>
<dbReference type="InterPro" id="IPR024074">
    <property type="entry name" value="AS_cat/multimer_dom_body"/>
</dbReference>
<dbReference type="InterPro" id="IPR014729">
    <property type="entry name" value="Rossmann-like_a/b/a_fold"/>
</dbReference>
<dbReference type="NCBIfam" id="TIGR00032">
    <property type="entry name" value="argG"/>
    <property type="match status" value="1"/>
</dbReference>
<dbReference type="NCBIfam" id="NF001770">
    <property type="entry name" value="PRK00509.1"/>
    <property type="match status" value="1"/>
</dbReference>
<dbReference type="PANTHER" id="PTHR11587">
    <property type="entry name" value="ARGININOSUCCINATE SYNTHASE"/>
    <property type="match status" value="1"/>
</dbReference>
<dbReference type="PANTHER" id="PTHR11587:SF2">
    <property type="entry name" value="ARGININOSUCCINATE SYNTHASE"/>
    <property type="match status" value="1"/>
</dbReference>
<dbReference type="Pfam" id="PF20979">
    <property type="entry name" value="Arginosuc_syn_C"/>
    <property type="match status" value="1"/>
</dbReference>
<dbReference type="Pfam" id="PF00764">
    <property type="entry name" value="Arginosuc_synth"/>
    <property type="match status" value="1"/>
</dbReference>
<dbReference type="SUPFAM" id="SSF52402">
    <property type="entry name" value="Adenine nucleotide alpha hydrolases-like"/>
    <property type="match status" value="1"/>
</dbReference>
<dbReference type="SUPFAM" id="SSF69864">
    <property type="entry name" value="Argininosuccinate synthetase, C-terminal domain"/>
    <property type="match status" value="1"/>
</dbReference>
<dbReference type="PROSITE" id="PS00564">
    <property type="entry name" value="ARGININOSUCCIN_SYN_1"/>
    <property type="match status" value="1"/>
</dbReference>
<dbReference type="PROSITE" id="PS00565">
    <property type="entry name" value="ARGININOSUCCIN_SYN_2"/>
    <property type="match status" value="1"/>
</dbReference>
<feature type="chain" id="PRO_0000148606" description="Argininosuccinate synthase">
    <location>
        <begin position="1"/>
        <end position="403"/>
    </location>
</feature>
<feature type="binding site" evidence="1">
    <location>
        <begin position="13"/>
        <end position="21"/>
    </location>
    <ligand>
        <name>ATP</name>
        <dbReference type="ChEBI" id="CHEBI:30616"/>
    </ligand>
</feature>
<feature type="binding site" evidence="1">
    <location>
        <position position="40"/>
    </location>
    <ligand>
        <name>ATP</name>
        <dbReference type="ChEBI" id="CHEBI:30616"/>
    </ligand>
</feature>
<feature type="binding site" evidence="1">
    <location>
        <position position="91"/>
    </location>
    <ligand>
        <name>L-citrulline</name>
        <dbReference type="ChEBI" id="CHEBI:57743"/>
    </ligand>
</feature>
<feature type="binding site" evidence="1">
    <location>
        <position position="96"/>
    </location>
    <ligand>
        <name>L-citrulline</name>
        <dbReference type="ChEBI" id="CHEBI:57743"/>
    </ligand>
</feature>
<feature type="binding site" evidence="1">
    <location>
        <position position="121"/>
    </location>
    <ligand>
        <name>ATP</name>
        <dbReference type="ChEBI" id="CHEBI:30616"/>
    </ligand>
</feature>
<feature type="binding site" evidence="1">
    <location>
        <position position="123"/>
    </location>
    <ligand>
        <name>L-aspartate</name>
        <dbReference type="ChEBI" id="CHEBI:29991"/>
    </ligand>
</feature>
<feature type="binding site" evidence="1">
    <location>
        <position position="127"/>
    </location>
    <ligand>
        <name>L-aspartate</name>
        <dbReference type="ChEBI" id="CHEBI:29991"/>
    </ligand>
</feature>
<feature type="binding site" evidence="1">
    <location>
        <position position="127"/>
    </location>
    <ligand>
        <name>L-citrulline</name>
        <dbReference type="ChEBI" id="CHEBI:57743"/>
    </ligand>
</feature>
<feature type="binding site" evidence="1">
    <location>
        <position position="128"/>
    </location>
    <ligand>
        <name>L-aspartate</name>
        <dbReference type="ChEBI" id="CHEBI:29991"/>
    </ligand>
</feature>
<feature type="binding site" evidence="1">
    <location>
        <position position="131"/>
    </location>
    <ligand>
        <name>L-citrulline</name>
        <dbReference type="ChEBI" id="CHEBI:57743"/>
    </ligand>
</feature>
<feature type="binding site" evidence="1">
    <location>
        <position position="180"/>
    </location>
    <ligand>
        <name>L-citrulline</name>
        <dbReference type="ChEBI" id="CHEBI:57743"/>
    </ligand>
</feature>
<feature type="binding site" evidence="1">
    <location>
        <position position="189"/>
    </location>
    <ligand>
        <name>L-citrulline</name>
        <dbReference type="ChEBI" id="CHEBI:57743"/>
    </ligand>
</feature>
<feature type="binding site" evidence="1">
    <location>
        <position position="265"/>
    </location>
    <ligand>
        <name>L-citrulline</name>
        <dbReference type="ChEBI" id="CHEBI:57743"/>
    </ligand>
</feature>
<feature type="binding site" evidence="1">
    <location>
        <position position="277"/>
    </location>
    <ligand>
        <name>L-citrulline</name>
        <dbReference type="ChEBI" id="CHEBI:57743"/>
    </ligand>
</feature>
<evidence type="ECO:0000255" key="1">
    <source>
        <dbReference type="HAMAP-Rule" id="MF_00005"/>
    </source>
</evidence>
<proteinExistence type="inferred from homology"/>
<comment type="catalytic activity">
    <reaction evidence="1">
        <text>L-citrulline + L-aspartate + ATP = 2-(N(omega)-L-arginino)succinate + AMP + diphosphate + H(+)</text>
        <dbReference type="Rhea" id="RHEA:10932"/>
        <dbReference type="ChEBI" id="CHEBI:15378"/>
        <dbReference type="ChEBI" id="CHEBI:29991"/>
        <dbReference type="ChEBI" id="CHEBI:30616"/>
        <dbReference type="ChEBI" id="CHEBI:33019"/>
        <dbReference type="ChEBI" id="CHEBI:57472"/>
        <dbReference type="ChEBI" id="CHEBI:57743"/>
        <dbReference type="ChEBI" id="CHEBI:456215"/>
        <dbReference type="EC" id="6.3.4.5"/>
    </reaction>
</comment>
<comment type="pathway">
    <text evidence="1">Amino-acid biosynthesis; L-arginine biosynthesis; L-arginine from L-ornithine and carbamoyl phosphate: step 2/3.</text>
</comment>
<comment type="subunit">
    <text evidence="1">Homotetramer.</text>
</comment>
<comment type="subcellular location">
    <subcellularLocation>
        <location evidence="1">Cytoplasm</location>
    </subcellularLocation>
</comment>
<comment type="similarity">
    <text evidence="1">Belongs to the argininosuccinate synthase family. Type 1 subfamily.</text>
</comment>
<gene>
    <name evidence="1" type="primary">argG</name>
    <name type="ordered locus">LIC_13324</name>
</gene>
<name>ASSY_LEPIC</name>
<organism>
    <name type="scientific">Leptospira interrogans serogroup Icterohaemorrhagiae serovar copenhageni (strain Fiocruz L1-130)</name>
    <dbReference type="NCBI Taxonomy" id="267671"/>
    <lineage>
        <taxon>Bacteria</taxon>
        <taxon>Pseudomonadati</taxon>
        <taxon>Spirochaetota</taxon>
        <taxon>Spirochaetia</taxon>
        <taxon>Leptospirales</taxon>
        <taxon>Leptospiraceae</taxon>
        <taxon>Leptospira</taxon>
    </lineage>
</organism>
<reference key="1">
    <citation type="journal article" date="2004" name="J. Bacteriol.">
        <title>Comparative genomics of two Leptospira interrogans serovars reveals novel insights into physiology and pathogenesis.</title>
        <authorList>
            <person name="Nascimento A.L.T.O."/>
            <person name="Ko A.I."/>
            <person name="Martins E.A.L."/>
            <person name="Monteiro-Vitorello C.B."/>
            <person name="Ho P.L."/>
            <person name="Haake D.A."/>
            <person name="Verjovski-Almeida S."/>
            <person name="Hartskeerl R.A."/>
            <person name="Marques M.V."/>
            <person name="Oliveira M.C."/>
            <person name="Menck C.F.M."/>
            <person name="Leite L.C.C."/>
            <person name="Carrer H."/>
            <person name="Coutinho L.L."/>
            <person name="Degrave W.M."/>
            <person name="Dellagostin O.A."/>
            <person name="El-Dorry H."/>
            <person name="Ferro E.S."/>
            <person name="Ferro M.I.T."/>
            <person name="Furlan L.R."/>
            <person name="Gamberini M."/>
            <person name="Giglioti E.A."/>
            <person name="Goes-Neto A."/>
            <person name="Goldman G.H."/>
            <person name="Goldman M.H.S."/>
            <person name="Harakava R."/>
            <person name="Jeronimo S.M.B."/>
            <person name="Junqueira-de-Azevedo I.L.M."/>
            <person name="Kimura E.T."/>
            <person name="Kuramae E.E."/>
            <person name="Lemos E.G.M."/>
            <person name="Lemos M.V.F."/>
            <person name="Marino C.L."/>
            <person name="Nunes L.R."/>
            <person name="de Oliveira R.C."/>
            <person name="Pereira G.G."/>
            <person name="Reis M.S."/>
            <person name="Schriefer A."/>
            <person name="Siqueira W.J."/>
            <person name="Sommer P."/>
            <person name="Tsai S.M."/>
            <person name="Simpson A.J.G."/>
            <person name="Ferro J.A."/>
            <person name="Camargo L.E.A."/>
            <person name="Kitajima J.P."/>
            <person name="Setubal J.C."/>
            <person name="Van Sluys M.A."/>
        </authorList>
    </citation>
    <scope>NUCLEOTIDE SEQUENCE [LARGE SCALE GENOMIC DNA]</scope>
    <source>
        <strain>Fiocruz L1-130</strain>
    </source>
</reference>
<accession>P61524</accession>
<protein>
    <recommendedName>
        <fullName evidence="1">Argininosuccinate synthase</fullName>
        <ecNumber evidence="1">6.3.4.5</ecNumber>
    </recommendedName>
    <alternativeName>
        <fullName evidence="1">Citrulline--aspartate ligase</fullName>
    </alternativeName>
</protein>
<keyword id="KW-0028">Amino-acid biosynthesis</keyword>
<keyword id="KW-0055">Arginine biosynthesis</keyword>
<keyword id="KW-0067">ATP-binding</keyword>
<keyword id="KW-0963">Cytoplasm</keyword>
<keyword id="KW-0436">Ligase</keyword>
<keyword id="KW-0547">Nucleotide-binding</keyword>
<sequence>MAQNKPVKKIVLAYSGGLDTSVILTWLKDTYGCEVIAFTADIGQKEELSGLEEKGIKTGASKVYIQDLRLEFARDFIFPAIQGNAIYEMRYLLGTSLARPLIAKAMVEVAEKEGADAFAHGATGKGNDQVRFELGVKSLAPEKTIIAPWRIWSFGGRSDLIEYAKSKGIPVPVTAEKPYSMDRNLMHISYEGGILEDPYKEPDEKMFLLTTSPEKAPDAPEYLELDFEEGNCVAINGKKMNPLEIMETLNTIAGKHGVGRVDIVENRLVGIKSRGVYETPGGTILFLAHRDLESITIDRDTQHHKDKLSIEFAELIYNGHWFSSRMKAVRAFITETQRYVSGTVRIKLYKGICSVVGRKSQVSLYNPEMATFEKEELYNQKDAEGFINIYGLPAQETARLRKK</sequence>